<sequence length="852" mass="95832">MEDSIIRIAPYHYIHVLDQNTNVARIENGPKTYIRQDNERVLFPPERMVTIPPRHYCVVANPVVRDREGMPVCDGFGQARLRHGDREVRLSQDPFPLYPGEELGQVATALQVVKTNSALHLQAQLDFEDHGEKRVAGDEWLFEGPGTYIPRTEVVMICWINAIVIRHNQGLRLRARKDTRDRDGRDRVTGEEWMVRRVGAYLPGVYEEVLDVVNAFILTEKRALHLRALQTVKDMRDRVRRTGEEWLVTLAEAEAYVPGVEEEVVGQVEVTTLGTRQYCVVLDPVGADGKPQLGQKLVVKGEKSFFLQPGEHLEAGIQDTYVLSEEEGLVLRAVEAFEEKDEAGKVHCRKPGDRWMIRGPVEYVPPVTVEVLSYRHAIPLDQNEGIYVRDLKSGKVRAVIGESYMLSQDEELWEKTLPPNVEALLTPDKDPVLNRNVHQSEAGHQEEGVKKRDPTRVVTFRVPHNAAVQVYDYSQKSARVVFGPELVMLETDEQLTVLSLSGGRPKRPGVIRSLCLLLGPDFFTDVIVIETADHARLQLQLAYNWHFEVKDRSDPMESAKVFSVLDFVGDACKAIASRIRGAVASVQFDDFHKNSSRILRAAVFGLDPELRVRERLLFPQNSLCVTSVDVHSVEPVDQRTRDALQRSVQLAIEITTKSQEAAARQEAARLEQEAKGRLERQRILDQAESERARRELLLLEADSTAVESRGAARAEAESRAEASRIEGEGSVLQAKLKAQALDIETEAELERLTKARERELKYIAEQNRLEVEKTRQLSELESRRFQEMVQAIGADTIRAIAESGPELQVKLLQGLGLNSTLITDGSTPVNLFSAAKGMLGVPAMSMEHRGSE</sequence>
<keyword id="KW-0963">Cytoplasm</keyword>
<keyword id="KW-0539">Nucleus</keyword>
<keyword id="KW-0677">Repeat</keyword>
<keyword id="KW-0687">Ribonucleoprotein</keyword>
<accession>Q90405</accession>
<organism>
    <name type="scientific">Diplobatis ommata</name>
    <name type="common">Ocellated electric ray</name>
    <name type="synonym">Discopyge ommata</name>
    <dbReference type="NCBI Taxonomy" id="1870830"/>
    <lineage>
        <taxon>Eukaryota</taxon>
        <taxon>Metazoa</taxon>
        <taxon>Chordata</taxon>
        <taxon>Craniata</taxon>
        <taxon>Vertebrata</taxon>
        <taxon>Chondrichthyes</taxon>
        <taxon>Elasmobranchii</taxon>
        <taxon>Batoidea</taxon>
        <taxon>Torpediniformes</taxon>
        <taxon>Narcinidae</taxon>
        <taxon>Diplobatis</taxon>
    </lineage>
</organism>
<comment type="function">
    <text evidence="1">Required for normal vault structure. Vaults are multi-subunit structures that may act as scaffolds for proteins involved in signal transduction. Vaults may also play a role in nucleo-cytoplasmic transport (By similarity).</text>
</comment>
<comment type="subunit">
    <text evidence="1">The vault ribonucleoprotein particle is a huge (400 A x 670 A) cage structure of 12.9 MDa. It consists of a dimer of half-vaults, with each half-vault comprising 39 identical major vault protein (MVP) chains, PARP4 and one or more vault RNAs (vRNAs) (By similarity).</text>
</comment>
<comment type="subcellular location">
    <subcellularLocation>
        <location evidence="2">Cytoplasm</location>
    </subcellularLocation>
    <subcellularLocation>
        <location evidence="2">Nucleus</location>
    </subcellularLocation>
</comment>
<comment type="tissue specificity">
    <text evidence="3">Expression is highest in brain and enriched in the electric lobe. Closely associated with synaptic vesicles in the nerve terminals of the electric organ.</text>
</comment>
<dbReference type="EMBL" id="X87771">
    <property type="protein sequence ID" value="CAA61041.1"/>
    <property type="molecule type" value="mRNA"/>
</dbReference>
<dbReference type="SMR" id="Q90405"/>
<dbReference type="GO" id="GO:0005737">
    <property type="term" value="C:cytoplasm"/>
    <property type="evidence" value="ECO:0007669"/>
    <property type="project" value="UniProtKB-SubCell"/>
</dbReference>
<dbReference type="GO" id="GO:0005634">
    <property type="term" value="C:nucleus"/>
    <property type="evidence" value="ECO:0007669"/>
    <property type="project" value="UniProtKB-SubCell"/>
</dbReference>
<dbReference type="GO" id="GO:1990904">
    <property type="term" value="C:ribonucleoprotein complex"/>
    <property type="evidence" value="ECO:0007669"/>
    <property type="project" value="UniProtKB-KW"/>
</dbReference>
<dbReference type="CDD" id="cd08825">
    <property type="entry name" value="MVP_shoulder"/>
    <property type="match status" value="1"/>
</dbReference>
<dbReference type="FunFam" id="2.30.30.560:FF:000002">
    <property type="entry name" value="Major vault protein-alpha"/>
    <property type="match status" value="1"/>
</dbReference>
<dbReference type="FunFam" id="2.30.30.570:FF:000002">
    <property type="entry name" value="Major vault protein-alpha"/>
    <property type="match status" value="1"/>
</dbReference>
<dbReference type="FunFam" id="2.30.30.550:FF:000001">
    <property type="entry name" value="major vault protein-like"/>
    <property type="match status" value="3"/>
</dbReference>
<dbReference type="FunFam" id="2.30.30.560:FF:000001">
    <property type="entry name" value="major vault protein-like"/>
    <property type="match status" value="1"/>
</dbReference>
<dbReference type="FunFam" id="2.30.30.570:FF:000001">
    <property type="entry name" value="major vault protein-like"/>
    <property type="match status" value="1"/>
</dbReference>
<dbReference type="FunFam" id="3.30.479.30:FF:000010">
    <property type="entry name" value="major vault protein-like"/>
    <property type="match status" value="1"/>
</dbReference>
<dbReference type="Gene3D" id="2.30.30.560">
    <property type="match status" value="2"/>
</dbReference>
<dbReference type="Gene3D" id="2.30.30.570">
    <property type="match status" value="2"/>
</dbReference>
<dbReference type="Gene3D" id="2.30.30.620">
    <property type="match status" value="1"/>
</dbReference>
<dbReference type="Gene3D" id="6.10.250.720">
    <property type="match status" value="1"/>
</dbReference>
<dbReference type="Gene3D" id="6.20.380.10">
    <property type="match status" value="1"/>
</dbReference>
<dbReference type="Gene3D" id="3.30.479.30">
    <property type="entry name" value="Band 7 domain"/>
    <property type="match status" value="1"/>
</dbReference>
<dbReference type="Gene3D" id="2.30.30.550">
    <property type="entry name" value="Major Vault Protein repeat"/>
    <property type="match status" value="4"/>
</dbReference>
<dbReference type="InterPro" id="IPR036013">
    <property type="entry name" value="Band_7/SPFH_dom_sf"/>
</dbReference>
<dbReference type="InterPro" id="IPR039059">
    <property type="entry name" value="MVP"/>
</dbReference>
<dbReference type="InterPro" id="IPR041139">
    <property type="entry name" value="MVP_rep_dom"/>
</dbReference>
<dbReference type="InterPro" id="IPR043023">
    <property type="entry name" value="MVP_rep_sf"/>
</dbReference>
<dbReference type="InterPro" id="IPR021870">
    <property type="entry name" value="MVP_shoulder"/>
</dbReference>
<dbReference type="InterPro" id="IPR041134">
    <property type="entry name" value="Vault_2"/>
</dbReference>
<dbReference type="InterPro" id="IPR043179">
    <property type="entry name" value="Vault_2_sf"/>
</dbReference>
<dbReference type="InterPro" id="IPR040989">
    <property type="entry name" value="Vault_3"/>
</dbReference>
<dbReference type="InterPro" id="IPR041136">
    <property type="entry name" value="Vault_4"/>
</dbReference>
<dbReference type="InterPro" id="IPR002499">
    <property type="entry name" value="Vault_N"/>
</dbReference>
<dbReference type="PANTHER" id="PTHR14165">
    <property type="entry name" value="MAJOR VAULT PROTEIN"/>
    <property type="match status" value="1"/>
</dbReference>
<dbReference type="PANTHER" id="PTHR14165:SF3">
    <property type="entry name" value="MAJOR VAULT PROTEIN"/>
    <property type="match status" value="1"/>
</dbReference>
<dbReference type="Pfam" id="PF11978">
    <property type="entry name" value="MVP_shoulder"/>
    <property type="match status" value="1"/>
</dbReference>
<dbReference type="Pfam" id="PF01505">
    <property type="entry name" value="Vault"/>
    <property type="match status" value="4"/>
</dbReference>
<dbReference type="Pfam" id="PF17794">
    <property type="entry name" value="Vault_2"/>
    <property type="match status" value="2"/>
</dbReference>
<dbReference type="Pfam" id="PF17795">
    <property type="entry name" value="Vault_3"/>
    <property type="match status" value="1"/>
</dbReference>
<dbReference type="Pfam" id="PF17796">
    <property type="entry name" value="Vault_4"/>
    <property type="match status" value="1"/>
</dbReference>
<dbReference type="PROSITE" id="PS51224">
    <property type="entry name" value="MVP"/>
    <property type="match status" value="8"/>
</dbReference>
<evidence type="ECO:0000250" key="1"/>
<evidence type="ECO:0000250" key="2">
    <source>
        <dbReference type="UniProtKB" id="Q14764"/>
    </source>
</evidence>
<evidence type="ECO:0000269" key="3">
    <source>
    </source>
</evidence>
<reference key="1">
    <citation type="journal article" date="1996" name="J. Biol. Chem.">
        <title>The major vault protein (MVP100) is contained in cholinergic nerve terminals of electric ray electric organ.</title>
        <authorList>
            <person name="Herrmann C."/>
            <person name="Volknandt W."/>
            <person name="Wittich B."/>
            <person name="Kellner R."/>
            <person name="Zimmermann H."/>
        </authorList>
    </citation>
    <scope>NUCLEOTIDE SEQUENCE [MRNA]</scope>
    <scope>TISSUE SPECIFICITY</scope>
    <source>
        <tissue>Electric lobe</tissue>
    </source>
</reference>
<proteinExistence type="evidence at transcript level"/>
<gene>
    <name type="primary">MVP</name>
</gene>
<feature type="chain" id="PRO_0000158984" description="Major vault protein">
    <location>
        <begin position="1"/>
        <end position="852"/>
    </location>
</feature>
<feature type="repeat" description="MVP 1">
    <location>
        <begin position="2"/>
        <end position="54"/>
    </location>
</feature>
<feature type="repeat" description="MVP 2">
    <location>
        <begin position="55"/>
        <end position="109"/>
    </location>
</feature>
<feature type="repeat" description="MVP 3">
    <location>
        <begin position="110"/>
        <end position="161"/>
    </location>
</feature>
<feature type="repeat" description="MVP 4">
    <location>
        <begin position="162"/>
        <end position="214"/>
    </location>
</feature>
<feature type="repeat" description="MVP 5">
    <location>
        <begin position="215"/>
        <end position="269"/>
    </location>
</feature>
<feature type="repeat" description="MVP 6">
    <location>
        <begin position="270"/>
        <end position="320"/>
    </location>
</feature>
<feature type="repeat" description="MVP 7">
    <location>
        <begin position="321"/>
        <end position="377"/>
    </location>
</feature>
<feature type="repeat" description="MVP 8">
    <location>
        <begin position="378"/>
        <end position="457"/>
    </location>
</feature>
<feature type="repeat" description="MVP 9">
    <location>
        <begin position="458"/>
        <end position="520"/>
    </location>
</feature>
<protein>
    <recommendedName>
        <fullName>Major vault protein</fullName>
    </recommendedName>
    <alternativeName>
        <fullName>MVP100</fullName>
        <shortName>P100</shortName>
    </alternativeName>
</protein>
<name>MVP_DIPOM</name>